<keyword id="KW-0687">Ribonucleoprotein</keyword>
<keyword id="KW-0689">Ribosomal protein</keyword>
<keyword id="KW-0694">RNA-binding</keyword>
<keyword id="KW-0699">rRNA-binding</keyword>
<reference key="1">
    <citation type="submission" date="2007-05" db="EMBL/GenBank/DDBJ databases">
        <title>Complete sequence of Dehalococcoides sp. BAV1.</title>
        <authorList>
            <consortium name="US DOE Joint Genome Institute"/>
            <person name="Copeland A."/>
            <person name="Lucas S."/>
            <person name="Lapidus A."/>
            <person name="Barry K."/>
            <person name="Detter J.C."/>
            <person name="Glavina del Rio T."/>
            <person name="Hammon N."/>
            <person name="Israni S."/>
            <person name="Pitluck S."/>
            <person name="Lowry S."/>
            <person name="Clum A."/>
            <person name="Schmutz J."/>
            <person name="Larimer F."/>
            <person name="Land M."/>
            <person name="Hauser L."/>
            <person name="Kyrpides N."/>
            <person name="Kim E."/>
            <person name="Ritalahti K.M."/>
            <person name="Loeffler F."/>
            <person name="Richardson P."/>
        </authorList>
    </citation>
    <scope>NUCLEOTIDE SEQUENCE [LARGE SCALE GENOMIC DNA]</scope>
    <source>
        <strain>ATCC BAA-2100 / JCM 16839 / KCTC 5957 / BAV1</strain>
    </source>
</reference>
<protein>
    <recommendedName>
        <fullName evidence="1">Small ribosomal subunit protein uS15</fullName>
    </recommendedName>
    <alternativeName>
        <fullName evidence="2">30S ribosomal protein S15</fullName>
    </alternativeName>
</protein>
<organism>
    <name type="scientific">Dehalococcoides mccartyi (strain ATCC BAA-2100 / JCM 16839 / KCTC 5957 / BAV1)</name>
    <dbReference type="NCBI Taxonomy" id="216389"/>
    <lineage>
        <taxon>Bacteria</taxon>
        <taxon>Bacillati</taxon>
        <taxon>Chloroflexota</taxon>
        <taxon>Dehalococcoidia</taxon>
        <taxon>Dehalococcoidales</taxon>
        <taxon>Dehalococcoidaceae</taxon>
        <taxon>Dehalococcoides</taxon>
    </lineage>
</organism>
<gene>
    <name evidence="1" type="primary">rpsO</name>
    <name type="ordered locus">DehaBAV1_0860</name>
</gene>
<evidence type="ECO:0000255" key="1">
    <source>
        <dbReference type="HAMAP-Rule" id="MF_01343"/>
    </source>
</evidence>
<evidence type="ECO:0000305" key="2"/>
<sequence>MDKQEKSLIINEFKKSESDTGSTEVQVALLTARIHQLTTHMIANKHDFHTKRSLLTLVGRRRRLLSYMRNSNGAGYQELIANLGLRK</sequence>
<proteinExistence type="inferred from homology"/>
<dbReference type="EMBL" id="CP000688">
    <property type="protein sequence ID" value="ABQ17442.1"/>
    <property type="molecule type" value="Genomic_DNA"/>
</dbReference>
<dbReference type="SMR" id="A5FQT1"/>
<dbReference type="KEGG" id="deb:DehaBAV1_0860"/>
<dbReference type="PATRIC" id="fig|216389.18.peg.910"/>
<dbReference type="HOGENOM" id="CLU_148518_0_1_0"/>
<dbReference type="GO" id="GO:0022627">
    <property type="term" value="C:cytosolic small ribosomal subunit"/>
    <property type="evidence" value="ECO:0007669"/>
    <property type="project" value="TreeGrafter"/>
</dbReference>
<dbReference type="GO" id="GO:0019843">
    <property type="term" value="F:rRNA binding"/>
    <property type="evidence" value="ECO:0007669"/>
    <property type="project" value="UniProtKB-UniRule"/>
</dbReference>
<dbReference type="GO" id="GO:0003735">
    <property type="term" value="F:structural constituent of ribosome"/>
    <property type="evidence" value="ECO:0007669"/>
    <property type="project" value="InterPro"/>
</dbReference>
<dbReference type="GO" id="GO:0006412">
    <property type="term" value="P:translation"/>
    <property type="evidence" value="ECO:0007669"/>
    <property type="project" value="UniProtKB-UniRule"/>
</dbReference>
<dbReference type="CDD" id="cd00353">
    <property type="entry name" value="Ribosomal_S15p_S13e"/>
    <property type="match status" value="1"/>
</dbReference>
<dbReference type="FunFam" id="1.10.287.10:FF:000002">
    <property type="entry name" value="30S ribosomal protein S15"/>
    <property type="match status" value="1"/>
</dbReference>
<dbReference type="Gene3D" id="6.10.250.3130">
    <property type="match status" value="1"/>
</dbReference>
<dbReference type="Gene3D" id="1.10.287.10">
    <property type="entry name" value="S15/NS1, RNA-binding"/>
    <property type="match status" value="1"/>
</dbReference>
<dbReference type="HAMAP" id="MF_01343_B">
    <property type="entry name" value="Ribosomal_uS15_B"/>
    <property type="match status" value="1"/>
</dbReference>
<dbReference type="InterPro" id="IPR000589">
    <property type="entry name" value="Ribosomal_uS15"/>
</dbReference>
<dbReference type="InterPro" id="IPR005290">
    <property type="entry name" value="Ribosomal_uS15_bac-type"/>
</dbReference>
<dbReference type="InterPro" id="IPR009068">
    <property type="entry name" value="uS15_NS1_RNA-bd_sf"/>
</dbReference>
<dbReference type="NCBIfam" id="TIGR00952">
    <property type="entry name" value="S15_bact"/>
    <property type="match status" value="1"/>
</dbReference>
<dbReference type="PANTHER" id="PTHR23321">
    <property type="entry name" value="RIBOSOMAL PROTEIN S15, BACTERIAL AND ORGANELLAR"/>
    <property type="match status" value="1"/>
</dbReference>
<dbReference type="PANTHER" id="PTHR23321:SF26">
    <property type="entry name" value="SMALL RIBOSOMAL SUBUNIT PROTEIN US15M"/>
    <property type="match status" value="1"/>
</dbReference>
<dbReference type="Pfam" id="PF00312">
    <property type="entry name" value="Ribosomal_S15"/>
    <property type="match status" value="1"/>
</dbReference>
<dbReference type="SMART" id="SM01387">
    <property type="entry name" value="Ribosomal_S15"/>
    <property type="match status" value="1"/>
</dbReference>
<dbReference type="SUPFAM" id="SSF47060">
    <property type="entry name" value="S15/NS1 RNA-binding domain"/>
    <property type="match status" value="1"/>
</dbReference>
<dbReference type="PROSITE" id="PS00362">
    <property type="entry name" value="RIBOSOMAL_S15"/>
    <property type="match status" value="1"/>
</dbReference>
<name>RS15_DEHMB</name>
<accession>A5FQT1</accession>
<comment type="function">
    <text evidence="1">One of the primary rRNA binding proteins, it binds directly to 16S rRNA where it helps nucleate assembly of the platform of the 30S subunit by binding and bridging several RNA helices of the 16S rRNA.</text>
</comment>
<comment type="function">
    <text evidence="1">Forms an intersubunit bridge (bridge B4) with the 23S rRNA of the 50S subunit in the ribosome.</text>
</comment>
<comment type="subunit">
    <text evidence="1">Part of the 30S ribosomal subunit. Forms a bridge to the 50S subunit in the 70S ribosome, contacting the 23S rRNA.</text>
</comment>
<comment type="similarity">
    <text evidence="1">Belongs to the universal ribosomal protein uS15 family.</text>
</comment>
<feature type="chain" id="PRO_0000354195" description="Small ribosomal subunit protein uS15">
    <location>
        <begin position="1"/>
        <end position="87"/>
    </location>
</feature>